<reference key="1">
    <citation type="journal article" date="1998" name="Nature">
        <title>The complete genome of the hyperthermophilic bacterium Aquifex aeolicus.</title>
        <authorList>
            <person name="Deckert G."/>
            <person name="Warren P.V."/>
            <person name="Gaasterland T."/>
            <person name="Young W.G."/>
            <person name="Lenox A.L."/>
            <person name="Graham D.E."/>
            <person name="Overbeek R."/>
            <person name="Snead M.A."/>
            <person name="Keller M."/>
            <person name="Aujay M."/>
            <person name="Huber R."/>
            <person name="Feldman R.A."/>
            <person name="Short J.M."/>
            <person name="Olsen G.J."/>
            <person name="Swanson R.V."/>
        </authorList>
    </citation>
    <scope>NUCLEOTIDE SEQUENCE [LARGE SCALE GENOMIC DNA]</scope>
    <source>
        <strain>VF5</strain>
    </source>
</reference>
<keyword id="KW-1185">Reference proteome</keyword>
<keyword id="KW-0687">Ribonucleoprotein</keyword>
<keyword id="KW-0689">Ribosomal protein</keyword>
<comment type="similarity">
    <text evidence="1">Belongs to the bacterial ribosomal protein bL28 family.</text>
</comment>
<sequence>MADSEICGKRPVVGRRVTLSGERNRRIFKPNVHKMRVMLPDGTVKRMYVCTKCLKAGKVMKAPRIPKEG</sequence>
<gene>
    <name evidence="1" type="primary">rpmB</name>
    <name type="ordered locus">aq_080</name>
</gene>
<name>RL28_AQUAE</name>
<feature type="chain" id="PRO_0000178419" description="Large ribosomal subunit protein bL28">
    <location>
        <begin position="1"/>
        <end position="69"/>
    </location>
</feature>
<evidence type="ECO:0000255" key="1">
    <source>
        <dbReference type="HAMAP-Rule" id="MF_00373"/>
    </source>
</evidence>
<evidence type="ECO:0000305" key="2"/>
<protein>
    <recommendedName>
        <fullName evidence="1">Large ribosomal subunit protein bL28</fullName>
    </recommendedName>
    <alternativeName>
        <fullName evidence="2">50S ribosomal protein L28</fullName>
    </alternativeName>
</protein>
<organism>
    <name type="scientific">Aquifex aeolicus (strain VF5)</name>
    <dbReference type="NCBI Taxonomy" id="224324"/>
    <lineage>
        <taxon>Bacteria</taxon>
        <taxon>Pseudomonadati</taxon>
        <taxon>Aquificota</taxon>
        <taxon>Aquificia</taxon>
        <taxon>Aquificales</taxon>
        <taxon>Aquificaceae</taxon>
        <taxon>Aquifex</taxon>
    </lineage>
</organism>
<dbReference type="EMBL" id="AE000657">
    <property type="protein sequence ID" value="AAC06455.1"/>
    <property type="molecule type" value="Genomic_DNA"/>
</dbReference>
<dbReference type="PIR" id="A70308">
    <property type="entry name" value="A70308"/>
</dbReference>
<dbReference type="RefSeq" id="NP_213052.1">
    <property type="nucleotide sequence ID" value="NC_000918.1"/>
</dbReference>
<dbReference type="RefSeq" id="WP_010879990.1">
    <property type="nucleotide sequence ID" value="NC_000918.1"/>
</dbReference>
<dbReference type="SMR" id="O66492"/>
<dbReference type="STRING" id="224324.aq_080"/>
<dbReference type="EnsemblBacteria" id="AAC06455">
    <property type="protein sequence ID" value="AAC06455"/>
    <property type="gene ID" value="aq_080"/>
</dbReference>
<dbReference type="KEGG" id="aae:aq_080"/>
<dbReference type="PATRIC" id="fig|224324.8.peg.70"/>
<dbReference type="eggNOG" id="COG0227">
    <property type="taxonomic scope" value="Bacteria"/>
</dbReference>
<dbReference type="HOGENOM" id="CLU_064548_7_0_0"/>
<dbReference type="InParanoid" id="O66492"/>
<dbReference type="OrthoDB" id="9805609at2"/>
<dbReference type="Proteomes" id="UP000000798">
    <property type="component" value="Chromosome"/>
</dbReference>
<dbReference type="GO" id="GO:1990904">
    <property type="term" value="C:ribonucleoprotein complex"/>
    <property type="evidence" value="ECO:0007669"/>
    <property type="project" value="UniProtKB-KW"/>
</dbReference>
<dbReference type="GO" id="GO:0005840">
    <property type="term" value="C:ribosome"/>
    <property type="evidence" value="ECO:0007669"/>
    <property type="project" value="UniProtKB-KW"/>
</dbReference>
<dbReference type="GO" id="GO:0003735">
    <property type="term" value="F:structural constituent of ribosome"/>
    <property type="evidence" value="ECO:0007669"/>
    <property type="project" value="InterPro"/>
</dbReference>
<dbReference type="GO" id="GO:0006412">
    <property type="term" value="P:translation"/>
    <property type="evidence" value="ECO:0007669"/>
    <property type="project" value="UniProtKB-UniRule"/>
</dbReference>
<dbReference type="Gene3D" id="2.30.170.40">
    <property type="entry name" value="Ribosomal protein L28/L24"/>
    <property type="match status" value="1"/>
</dbReference>
<dbReference type="HAMAP" id="MF_00373">
    <property type="entry name" value="Ribosomal_bL28"/>
    <property type="match status" value="1"/>
</dbReference>
<dbReference type="InterPro" id="IPR050096">
    <property type="entry name" value="Bacterial_rp_bL28"/>
</dbReference>
<dbReference type="InterPro" id="IPR026569">
    <property type="entry name" value="Ribosomal_bL28"/>
</dbReference>
<dbReference type="InterPro" id="IPR034704">
    <property type="entry name" value="Ribosomal_bL28/bL31-like_sf"/>
</dbReference>
<dbReference type="InterPro" id="IPR001383">
    <property type="entry name" value="Ribosomal_bL28_bact-type"/>
</dbReference>
<dbReference type="InterPro" id="IPR037147">
    <property type="entry name" value="Ribosomal_bL28_sf"/>
</dbReference>
<dbReference type="NCBIfam" id="TIGR00009">
    <property type="entry name" value="L28"/>
    <property type="match status" value="1"/>
</dbReference>
<dbReference type="PANTHER" id="PTHR39080">
    <property type="entry name" value="50S RIBOSOMAL PROTEIN L28"/>
    <property type="match status" value="1"/>
</dbReference>
<dbReference type="PANTHER" id="PTHR39080:SF1">
    <property type="entry name" value="LARGE RIBOSOMAL SUBUNIT PROTEIN BL28A"/>
    <property type="match status" value="1"/>
</dbReference>
<dbReference type="Pfam" id="PF00830">
    <property type="entry name" value="Ribosomal_L28"/>
    <property type="match status" value="1"/>
</dbReference>
<dbReference type="SUPFAM" id="SSF143800">
    <property type="entry name" value="L28p-like"/>
    <property type="match status" value="1"/>
</dbReference>
<accession>O66492</accession>
<proteinExistence type="inferred from homology"/>